<sequence>MLLFKFNFTTAFLFTILAFAQARSHSSSSSSTSKSSASHHSSINSTSATSVYDFSSLTTPIVPTNGVAQEPTLYESSRGLSCPGYQARNISEYSYGVLAILELAGDACYAYGTDYPYLLLNVSYDTEERVHISISDLNQTQFQLSNRRDVWDAPLFYRSSNFSGNLQYNFSFNTDPFEFWITRIADDQVLFDTRGNPLIFEDQYIELTTNMVEDYNVYGLSGSQQSFRLGNNLTKTFWATGYSDSPEANMYGSHPFYMEQRYIPIGTTNTYTSASHGVLMLSSNGMEVLLRSTYIKYRMIGGIIDLFVYSGSTVSPKYTIQQYVQSIGTPTMQPYWSLGFQMSRWGYKTLSDLINMRSYLNASNIPTEGFWNDIDYMSEFRTFTVNSTAFPPNQTLDFFRSLDESHQHYVPVLDPAIYAANPNKSADRTYYPYYSGFEDNIFIKNPNGSAYVGMAWPGFVVYPDFTNPAVLQYWKQGILNLSTAFGSNYSYDLPFSGLCLDMNEPTSFCIGSCGSDLLKLNPVHPPFSLPGDVDNKVYSYPEDFNATNTTEYKSVSRASQSQYKATATSEKSHETPSSESLINGKPEFSINYPPYALDTDTETHDLAQFGVSPNATMHGNTLRYNLFNTYGYSESKISFEALNSIQPNIRPFLLSRSTFVGSGRYAAHWLGDNKSQWSDMVSSISSILTFNLLGIPMVGADVCGYNGNTDEELCARWMALGAFLPFYRNHNSLGSIPQEPFRWASVAEASRSAIEIRYSLLPYWYTLMHTASVDGTPMVRPLFFEFPKQISLASVDKQFMIGTALLISPALEPNTTYIQGIIPGDNDTIWYDWYNHSVINHDYDENITMSAPLGYVNIAVRGGNIIPLQQPGYTTYESRNNPYSLLIAMDNNGFASGSLYIDDGISMQTNSSLSVKLNSNSNTITCVVSGTMVSSPSLANITILGLSNPPNTILFNGQQLSDYQYSDQTLSLTNLLDLTVDGAFSKNWTVTWS</sequence>
<feature type="signal peptide" evidence="2">
    <location>
        <begin position="1"/>
        <end position="24"/>
    </location>
</feature>
<feature type="chain" id="PRO_0000018587" description="Uncharacterized family 31 glucosidase C30D11.01c">
    <location>
        <begin position="25"/>
        <end position="993"/>
    </location>
</feature>
<feature type="active site" evidence="1">
    <location>
        <position position="504"/>
    </location>
</feature>
<feature type="active site" description="Proton donor" evidence="1">
    <location>
        <position position="672"/>
    </location>
</feature>
<feature type="glycosylation site" description="N-linked (GlcNAc...) asparagine" evidence="2">
    <location>
        <position position="7"/>
    </location>
</feature>
<feature type="glycosylation site" description="N-linked (GlcNAc...) asparagine" evidence="2">
    <location>
        <position position="44"/>
    </location>
</feature>
<feature type="glycosylation site" description="N-linked (GlcNAc...) asparagine" evidence="2">
    <location>
        <position position="89"/>
    </location>
</feature>
<feature type="glycosylation site" description="N-linked (GlcNAc...) asparagine" evidence="2">
    <location>
        <position position="121"/>
    </location>
</feature>
<feature type="glycosylation site" description="N-linked (GlcNAc...) asparagine" evidence="2">
    <location>
        <position position="138"/>
    </location>
</feature>
<feature type="glycosylation site" description="N-linked (GlcNAc...) asparagine" evidence="2">
    <location>
        <position position="161"/>
    </location>
</feature>
<feature type="glycosylation site" description="N-linked (GlcNAc...) asparagine" evidence="2">
    <location>
        <position position="169"/>
    </location>
</feature>
<feature type="glycosylation site" description="N-linked (GlcNAc...) asparagine" evidence="2">
    <location>
        <position position="232"/>
    </location>
</feature>
<feature type="glycosylation site" description="N-linked (GlcNAc...) asparagine" evidence="2">
    <location>
        <position position="361"/>
    </location>
</feature>
<feature type="glycosylation site" description="N-linked (GlcNAc...) asparagine" evidence="2">
    <location>
        <position position="386"/>
    </location>
</feature>
<feature type="glycosylation site" description="N-linked (GlcNAc...) asparagine" evidence="2">
    <location>
        <position position="393"/>
    </location>
</feature>
<feature type="glycosylation site" description="N-linked (GlcNAc...) asparagine" evidence="2">
    <location>
        <position position="423"/>
    </location>
</feature>
<feature type="glycosylation site" description="N-linked (GlcNAc...) asparagine" evidence="2">
    <location>
        <position position="447"/>
    </location>
</feature>
<feature type="glycosylation site" description="N-linked (GlcNAc...) asparagine" evidence="2">
    <location>
        <position position="480"/>
    </location>
</feature>
<feature type="glycosylation site" description="N-linked (GlcNAc...) asparagine" evidence="2">
    <location>
        <position position="488"/>
    </location>
</feature>
<feature type="glycosylation site" description="N-linked (GlcNAc...) asparagine" evidence="2">
    <location>
        <position position="545"/>
    </location>
</feature>
<feature type="glycosylation site" description="N-linked (GlcNAc...) asparagine" evidence="2">
    <location>
        <position position="548"/>
    </location>
</feature>
<feature type="glycosylation site" description="N-linked (GlcNAc...) asparagine" evidence="2">
    <location>
        <position position="614"/>
    </location>
</feature>
<feature type="glycosylation site" description="N-linked (GlcNAc...) asparagine" evidence="2">
    <location>
        <position position="673"/>
    </location>
</feature>
<feature type="glycosylation site" description="N-linked (GlcNAc...) asparagine" evidence="2">
    <location>
        <position position="814"/>
    </location>
</feature>
<feature type="glycosylation site" description="N-linked (GlcNAc...) asparagine" evidence="2">
    <location>
        <position position="826"/>
    </location>
</feature>
<feature type="glycosylation site" description="N-linked (GlcNAc...) asparagine" evidence="2">
    <location>
        <position position="835"/>
    </location>
</feature>
<feature type="glycosylation site" description="N-linked (GlcNAc...) asparagine" evidence="2">
    <location>
        <position position="846"/>
    </location>
</feature>
<feature type="glycosylation site" description="N-linked (GlcNAc...) asparagine" evidence="2">
    <location>
        <position position="910"/>
    </location>
</feature>
<feature type="glycosylation site" description="N-linked (GlcNAc...) asparagine" evidence="2">
    <location>
        <position position="940"/>
    </location>
</feature>
<feature type="glycosylation site" description="N-linked (GlcNAc...) asparagine" evidence="2">
    <location>
        <position position="987"/>
    </location>
</feature>
<protein>
    <recommendedName>
        <fullName>Uncharacterized family 31 glucosidase C30D11.01c</fullName>
        <ecNumber>3.2.1.-</ecNumber>
    </recommendedName>
</protein>
<gene>
    <name type="ORF">SPAC30D11.01c</name>
    <name type="ORF">SPAC56F8.01</name>
</gene>
<accession>Q09901</accession>
<accession>Q9USD5</accession>
<comment type="similarity">
    <text evidence="3">Belongs to the glycosyl hydrolase 31 family.</text>
</comment>
<name>YAJ1_SCHPO</name>
<reference key="1">
    <citation type="journal article" date="2002" name="Nature">
        <title>The genome sequence of Schizosaccharomyces pombe.</title>
        <authorList>
            <person name="Wood V."/>
            <person name="Gwilliam R."/>
            <person name="Rajandream M.A."/>
            <person name="Lyne M.H."/>
            <person name="Lyne R."/>
            <person name="Stewart A."/>
            <person name="Sgouros J.G."/>
            <person name="Peat N."/>
            <person name="Hayles J."/>
            <person name="Baker S.G."/>
            <person name="Basham D."/>
            <person name="Bowman S."/>
            <person name="Brooks K."/>
            <person name="Brown D."/>
            <person name="Brown S."/>
            <person name="Chillingworth T."/>
            <person name="Churcher C.M."/>
            <person name="Collins M."/>
            <person name="Connor R."/>
            <person name="Cronin A."/>
            <person name="Davis P."/>
            <person name="Feltwell T."/>
            <person name="Fraser A."/>
            <person name="Gentles S."/>
            <person name="Goble A."/>
            <person name="Hamlin N."/>
            <person name="Harris D.E."/>
            <person name="Hidalgo J."/>
            <person name="Hodgson G."/>
            <person name="Holroyd S."/>
            <person name="Hornsby T."/>
            <person name="Howarth S."/>
            <person name="Huckle E.J."/>
            <person name="Hunt S."/>
            <person name="Jagels K."/>
            <person name="James K.D."/>
            <person name="Jones L."/>
            <person name="Jones M."/>
            <person name="Leather S."/>
            <person name="McDonald S."/>
            <person name="McLean J."/>
            <person name="Mooney P."/>
            <person name="Moule S."/>
            <person name="Mungall K.L."/>
            <person name="Murphy L.D."/>
            <person name="Niblett D."/>
            <person name="Odell C."/>
            <person name="Oliver K."/>
            <person name="O'Neil S."/>
            <person name="Pearson D."/>
            <person name="Quail M.A."/>
            <person name="Rabbinowitsch E."/>
            <person name="Rutherford K.M."/>
            <person name="Rutter S."/>
            <person name="Saunders D."/>
            <person name="Seeger K."/>
            <person name="Sharp S."/>
            <person name="Skelton J."/>
            <person name="Simmonds M.N."/>
            <person name="Squares R."/>
            <person name="Squares S."/>
            <person name="Stevens K."/>
            <person name="Taylor K."/>
            <person name="Taylor R.G."/>
            <person name="Tivey A."/>
            <person name="Walsh S.V."/>
            <person name="Warren T."/>
            <person name="Whitehead S."/>
            <person name="Woodward J.R."/>
            <person name="Volckaert G."/>
            <person name="Aert R."/>
            <person name="Robben J."/>
            <person name="Grymonprez B."/>
            <person name="Weltjens I."/>
            <person name="Vanstreels E."/>
            <person name="Rieger M."/>
            <person name="Schaefer M."/>
            <person name="Mueller-Auer S."/>
            <person name="Gabel C."/>
            <person name="Fuchs M."/>
            <person name="Duesterhoeft A."/>
            <person name="Fritzc C."/>
            <person name="Holzer E."/>
            <person name="Moestl D."/>
            <person name="Hilbert H."/>
            <person name="Borzym K."/>
            <person name="Langer I."/>
            <person name="Beck A."/>
            <person name="Lehrach H."/>
            <person name="Reinhardt R."/>
            <person name="Pohl T.M."/>
            <person name="Eger P."/>
            <person name="Zimmermann W."/>
            <person name="Wedler H."/>
            <person name="Wambutt R."/>
            <person name="Purnelle B."/>
            <person name="Goffeau A."/>
            <person name="Cadieu E."/>
            <person name="Dreano S."/>
            <person name="Gloux S."/>
            <person name="Lelaure V."/>
            <person name="Mottier S."/>
            <person name="Galibert F."/>
            <person name="Aves S.J."/>
            <person name="Xiang Z."/>
            <person name="Hunt C."/>
            <person name="Moore K."/>
            <person name="Hurst S.M."/>
            <person name="Lucas M."/>
            <person name="Rochet M."/>
            <person name="Gaillardin C."/>
            <person name="Tallada V.A."/>
            <person name="Garzon A."/>
            <person name="Thode G."/>
            <person name="Daga R.R."/>
            <person name="Cruzado L."/>
            <person name="Jimenez J."/>
            <person name="Sanchez M."/>
            <person name="del Rey F."/>
            <person name="Benito J."/>
            <person name="Dominguez A."/>
            <person name="Revuelta J.L."/>
            <person name="Moreno S."/>
            <person name="Armstrong J."/>
            <person name="Forsburg S.L."/>
            <person name="Cerutti L."/>
            <person name="Lowe T."/>
            <person name="McCombie W.R."/>
            <person name="Paulsen I."/>
            <person name="Potashkin J."/>
            <person name="Shpakovski G.V."/>
            <person name="Ussery D."/>
            <person name="Barrell B.G."/>
            <person name="Nurse P."/>
        </authorList>
    </citation>
    <scope>NUCLEOTIDE SEQUENCE [LARGE SCALE GENOMIC DNA]</scope>
    <source>
        <strain>972 / ATCC 24843</strain>
    </source>
</reference>
<reference key="2">
    <citation type="journal article" date="2000" name="Genes Cells">
        <title>Large-scale screening of intracellular protein localization in living fission yeast cells by the use of a GFP-fusion genomic DNA library.</title>
        <authorList>
            <person name="Ding D.-Q."/>
            <person name="Tomita Y."/>
            <person name="Yamamoto A."/>
            <person name="Chikashige Y."/>
            <person name="Haraguchi T."/>
            <person name="Hiraoka Y."/>
        </authorList>
    </citation>
    <scope>NUCLEOTIDE SEQUENCE [LARGE SCALE GENOMIC DNA] OF 440-637</scope>
    <source>
        <strain>ATCC 38364 / 968</strain>
    </source>
</reference>
<keyword id="KW-0325">Glycoprotein</keyword>
<keyword id="KW-0326">Glycosidase</keyword>
<keyword id="KW-0378">Hydrolase</keyword>
<keyword id="KW-1185">Reference proteome</keyword>
<keyword id="KW-0732">Signal</keyword>
<organism>
    <name type="scientific">Schizosaccharomyces pombe (strain 972 / ATCC 24843)</name>
    <name type="common">Fission yeast</name>
    <dbReference type="NCBI Taxonomy" id="284812"/>
    <lineage>
        <taxon>Eukaryota</taxon>
        <taxon>Fungi</taxon>
        <taxon>Dikarya</taxon>
        <taxon>Ascomycota</taxon>
        <taxon>Taphrinomycotina</taxon>
        <taxon>Schizosaccharomycetes</taxon>
        <taxon>Schizosaccharomycetales</taxon>
        <taxon>Schizosaccharomycetaceae</taxon>
        <taxon>Schizosaccharomyces</taxon>
    </lineage>
</organism>
<evidence type="ECO:0000250" key="1"/>
<evidence type="ECO:0000255" key="2"/>
<evidence type="ECO:0000305" key="3"/>
<proteinExistence type="inferred from homology"/>
<dbReference type="EC" id="3.2.1.-"/>
<dbReference type="EMBL" id="CU329670">
    <property type="protein sequence ID" value="CAA91887.2"/>
    <property type="molecule type" value="Genomic_DNA"/>
</dbReference>
<dbReference type="EMBL" id="AB027843">
    <property type="protein sequence ID" value="BAA87147.1"/>
    <property type="molecule type" value="Genomic_DNA"/>
</dbReference>
<dbReference type="PIR" id="T38598">
    <property type="entry name" value="T38598"/>
</dbReference>
<dbReference type="RefSeq" id="NP_593216.2">
    <property type="nucleotide sequence ID" value="NM_001018612.2"/>
</dbReference>
<dbReference type="SMR" id="Q09901"/>
<dbReference type="BioGRID" id="278574">
    <property type="interactions" value="13"/>
</dbReference>
<dbReference type="FunCoup" id="Q09901">
    <property type="interactions" value="52"/>
</dbReference>
<dbReference type="STRING" id="284812.Q09901"/>
<dbReference type="CAZy" id="GH31">
    <property type="family name" value="Glycoside Hydrolase Family 31"/>
</dbReference>
<dbReference type="iPTMnet" id="Q09901"/>
<dbReference type="PaxDb" id="4896-SPAC30D11.01c.1"/>
<dbReference type="EnsemblFungi" id="SPAC30D11.01c.1">
    <property type="protein sequence ID" value="SPAC30D11.01c.1:pep"/>
    <property type="gene ID" value="SPAC30D11.01c"/>
</dbReference>
<dbReference type="GeneID" id="2542098"/>
<dbReference type="KEGG" id="spo:2542098"/>
<dbReference type="PomBase" id="SPAC30D11.01c"/>
<dbReference type="VEuPathDB" id="FungiDB:SPAC30D11.01c"/>
<dbReference type="eggNOG" id="KOG1065">
    <property type="taxonomic scope" value="Eukaryota"/>
</dbReference>
<dbReference type="HOGENOM" id="CLU_000631_11_0_1"/>
<dbReference type="InParanoid" id="Q09901"/>
<dbReference type="OMA" id="WEFPNDE"/>
<dbReference type="PhylomeDB" id="Q09901"/>
<dbReference type="Reactome" id="R-SPO-189085">
    <property type="pathway name" value="Digestion of dietary carbohydrate"/>
</dbReference>
<dbReference type="Reactome" id="R-SPO-6798695">
    <property type="pathway name" value="Neutrophil degranulation"/>
</dbReference>
<dbReference type="Reactome" id="R-SPO-70221">
    <property type="pathway name" value="Glycogen breakdown (glycogenolysis)"/>
</dbReference>
<dbReference type="PRO" id="PR:Q09901"/>
<dbReference type="Proteomes" id="UP000002485">
    <property type="component" value="Chromosome I"/>
</dbReference>
<dbReference type="GO" id="GO:0009986">
    <property type="term" value="C:cell surface"/>
    <property type="evidence" value="ECO:0007005"/>
    <property type="project" value="PomBase"/>
</dbReference>
<dbReference type="GO" id="GO:0005576">
    <property type="term" value="C:extracellular region"/>
    <property type="evidence" value="ECO:0000314"/>
    <property type="project" value="PomBase"/>
</dbReference>
<dbReference type="GO" id="GO:0090599">
    <property type="term" value="F:alpha-glucosidase activity"/>
    <property type="evidence" value="ECO:0000250"/>
    <property type="project" value="PomBase"/>
</dbReference>
<dbReference type="GO" id="GO:0030246">
    <property type="term" value="F:carbohydrate binding"/>
    <property type="evidence" value="ECO:0007669"/>
    <property type="project" value="InterPro"/>
</dbReference>
<dbReference type="GO" id="GO:0004553">
    <property type="term" value="F:hydrolase activity, hydrolyzing O-glycosyl compounds"/>
    <property type="evidence" value="ECO:0000318"/>
    <property type="project" value="GO_Central"/>
</dbReference>
<dbReference type="GO" id="GO:0009313">
    <property type="term" value="P:oligosaccharide catabolic process"/>
    <property type="evidence" value="ECO:0000305"/>
    <property type="project" value="PomBase"/>
</dbReference>
<dbReference type="GO" id="GO:0000272">
    <property type="term" value="P:polysaccharide catabolic process"/>
    <property type="evidence" value="ECO:0000305"/>
    <property type="project" value="PomBase"/>
</dbReference>
<dbReference type="CDD" id="cd06602">
    <property type="entry name" value="GH31_MGAM_SI_GAA"/>
    <property type="match status" value="1"/>
</dbReference>
<dbReference type="CDD" id="cd14752">
    <property type="entry name" value="GH31_N"/>
    <property type="match status" value="1"/>
</dbReference>
<dbReference type="FunFam" id="2.60.40.1180:FF:000001">
    <property type="entry name" value="Maltase-glucoamylase, intestinal"/>
    <property type="match status" value="1"/>
</dbReference>
<dbReference type="FunFam" id="2.60.40.1760:FF:000005">
    <property type="entry name" value="Putative alpha-glucosidase AgdA"/>
    <property type="match status" value="1"/>
</dbReference>
<dbReference type="FunFam" id="3.20.20.80:FF:000138">
    <property type="entry name" value="Putative alpha-glucosidase AgdA"/>
    <property type="match status" value="1"/>
</dbReference>
<dbReference type="FunFam" id="3.20.20.80:FF:000169">
    <property type="entry name" value="Putative alpha-glucosidase AgdA"/>
    <property type="match status" value="1"/>
</dbReference>
<dbReference type="Gene3D" id="3.20.20.80">
    <property type="entry name" value="Glycosidases"/>
    <property type="match status" value="2"/>
</dbReference>
<dbReference type="Gene3D" id="2.60.40.1760">
    <property type="entry name" value="glycosyl hydrolase (family 31)"/>
    <property type="match status" value="1"/>
</dbReference>
<dbReference type="Gene3D" id="2.60.40.1180">
    <property type="entry name" value="Golgi alpha-mannosidase II"/>
    <property type="match status" value="2"/>
</dbReference>
<dbReference type="InterPro" id="IPR011013">
    <property type="entry name" value="Gal_mutarotase_sf_dom"/>
</dbReference>
<dbReference type="InterPro" id="IPR048395">
    <property type="entry name" value="Glyco_hydro_31_C"/>
</dbReference>
<dbReference type="InterPro" id="IPR030459">
    <property type="entry name" value="Glyco_hydro_31_CS"/>
</dbReference>
<dbReference type="InterPro" id="IPR000322">
    <property type="entry name" value="Glyco_hydro_31_TIM"/>
</dbReference>
<dbReference type="InterPro" id="IPR013780">
    <property type="entry name" value="Glyco_hydro_b"/>
</dbReference>
<dbReference type="InterPro" id="IPR017853">
    <property type="entry name" value="Glycoside_hydrolase_SF"/>
</dbReference>
<dbReference type="PANTHER" id="PTHR22762">
    <property type="entry name" value="ALPHA-GLUCOSIDASE"/>
    <property type="match status" value="1"/>
</dbReference>
<dbReference type="PANTHER" id="PTHR22762:SF133">
    <property type="entry name" value="P-TYPE DOMAIN-CONTAINING PROTEIN"/>
    <property type="match status" value="1"/>
</dbReference>
<dbReference type="Pfam" id="PF01055">
    <property type="entry name" value="Glyco_hydro_31_2nd"/>
    <property type="match status" value="1"/>
</dbReference>
<dbReference type="Pfam" id="PF21365">
    <property type="entry name" value="Glyco_hydro_31_3rd"/>
    <property type="match status" value="1"/>
</dbReference>
<dbReference type="SUPFAM" id="SSF51445">
    <property type="entry name" value="(Trans)glycosidases"/>
    <property type="match status" value="1"/>
</dbReference>
<dbReference type="SUPFAM" id="SSF74650">
    <property type="entry name" value="Galactose mutarotase-like"/>
    <property type="match status" value="1"/>
</dbReference>
<dbReference type="SUPFAM" id="SSF51011">
    <property type="entry name" value="Glycosyl hydrolase domain"/>
    <property type="match status" value="1"/>
</dbReference>
<dbReference type="PROSITE" id="PS00707">
    <property type="entry name" value="GLYCOSYL_HYDROL_F31_2"/>
    <property type="match status" value="1"/>
</dbReference>